<keyword id="KW-0004">4Fe-4S</keyword>
<keyword id="KW-0963">Cytoplasm</keyword>
<keyword id="KW-1015">Disulfide bond</keyword>
<keyword id="KW-0408">Iron</keyword>
<keyword id="KW-0411">Iron-sulfur</keyword>
<keyword id="KW-0479">Metal-binding</keyword>
<keyword id="KW-0489">Methyltransferase</keyword>
<keyword id="KW-1185">Reference proteome</keyword>
<keyword id="KW-0698">rRNA processing</keyword>
<keyword id="KW-0949">S-adenosyl-L-methionine</keyword>
<keyword id="KW-0808">Transferase</keyword>
<keyword id="KW-0819">tRNA processing</keyword>
<feature type="chain" id="PRO_0000350149" description="Probable dual-specificity RNA methyltransferase RlmN">
    <location>
        <begin position="1"/>
        <end position="357"/>
    </location>
</feature>
<feature type="domain" description="Radical SAM core" evidence="2">
    <location>
        <begin position="106"/>
        <end position="340"/>
    </location>
</feature>
<feature type="active site" description="Proton acceptor" evidence="1">
    <location>
        <position position="95"/>
    </location>
</feature>
<feature type="active site" description="S-methylcysteine intermediate" evidence="1">
    <location>
        <position position="345"/>
    </location>
</feature>
<feature type="binding site" evidence="1">
    <location>
        <position position="120"/>
    </location>
    <ligand>
        <name>[4Fe-4S] cluster</name>
        <dbReference type="ChEBI" id="CHEBI:49883"/>
        <note>4Fe-4S-S-AdoMet</note>
    </ligand>
</feature>
<feature type="binding site" evidence="1">
    <location>
        <position position="124"/>
    </location>
    <ligand>
        <name>[4Fe-4S] cluster</name>
        <dbReference type="ChEBI" id="CHEBI:49883"/>
        <note>4Fe-4S-S-AdoMet</note>
    </ligand>
</feature>
<feature type="binding site" evidence="1">
    <location>
        <position position="127"/>
    </location>
    <ligand>
        <name>[4Fe-4S] cluster</name>
        <dbReference type="ChEBI" id="CHEBI:49883"/>
        <note>4Fe-4S-S-AdoMet</note>
    </ligand>
</feature>
<feature type="binding site" evidence="1">
    <location>
        <begin position="172"/>
        <end position="173"/>
    </location>
    <ligand>
        <name>S-adenosyl-L-methionine</name>
        <dbReference type="ChEBI" id="CHEBI:59789"/>
    </ligand>
</feature>
<feature type="binding site" evidence="1">
    <location>
        <position position="204"/>
    </location>
    <ligand>
        <name>S-adenosyl-L-methionine</name>
        <dbReference type="ChEBI" id="CHEBI:59789"/>
    </ligand>
</feature>
<feature type="binding site" evidence="1">
    <location>
        <begin position="227"/>
        <end position="229"/>
    </location>
    <ligand>
        <name>S-adenosyl-L-methionine</name>
        <dbReference type="ChEBI" id="CHEBI:59789"/>
    </ligand>
</feature>
<feature type="binding site" evidence="1">
    <location>
        <position position="302"/>
    </location>
    <ligand>
        <name>S-adenosyl-L-methionine</name>
        <dbReference type="ChEBI" id="CHEBI:59789"/>
    </ligand>
</feature>
<feature type="disulfide bond" description="(transient)" evidence="1">
    <location>
        <begin position="113"/>
        <end position="345"/>
    </location>
</feature>
<evidence type="ECO:0000255" key="1">
    <source>
        <dbReference type="HAMAP-Rule" id="MF_01849"/>
    </source>
</evidence>
<evidence type="ECO:0000255" key="2">
    <source>
        <dbReference type="PROSITE-ProRule" id="PRU01266"/>
    </source>
</evidence>
<protein>
    <recommendedName>
        <fullName evidence="1">Probable dual-specificity RNA methyltransferase RlmN</fullName>
        <ecNumber evidence="1">2.1.1.192</ecNumber>
    </recommendedName>
    <alternativeName>
        <fullName evidence="1">23S rRNA (adenine(2503)-C(2))-methyltransferase</fullName>
    </alternativeName>
    <alternativeName>
        <fullName evidence="1">23S rRNA m2A2503 methyltransferase</fullName>
    </alternativeName>
    <alternativeName>
        <fullName evidence="1">Ribosomal RNA large subunit methyltransferase N</fullName>
    </alternativeName>
    <alternativeName>
        <fullName evidence="1">tRNA (adenine(37)-C(2))-methyltransferase</fullName>
    </alternativeName>
    <alternativeName>
        <fullName evidence="1">tRNA m2A37 methyltransferase</fullName>
    </alternativeName>
</protein>
<dbReference type="EC" id="2.1.1.192" evidence="1"/>
<dbReference type="EMBL" id="AP008230">
    <property type="protein sequence ID" value="BAE84480.1"/>
    <property type="molecule type" value="Genomic_DNA"/>
</dbReference>
<dbReference type="SMR" id="Q24U12"/>
<dbReference type="STRING" id="138119.DSY2691"/>
<dbReference type="KEGG" id="dsy:DSY2691"/>
<dbReference type="eggNOG" id="COG0820">
    <property type="taxonomic scope" value="Bacteria"/>
</dbReference>
<dbReference type="HOGENOM" id="CLU_029101_0_1_9"/>
<dbReference type="Proteomes" id="UP000001946">
    <property type="component" value="Chromosome"/>
</dbReference>
<dbReference type="GO" id="GO:0005737">
    <property type="term" value="C:cytoplasm"/>
    <property type="evidence" value="ECO:0007669"/>
    <property type="project" value="UniProtKB-SubCell"/>
</dbReference>
<dbReference type="GO" id="GO:0051539">
    <property type="term" value="F:4 iron, 4 sulfur cluster binding"/>
    <property type="evidence" value="ECO:0007669"/>
    <property type="project" value="UniProtKB-UniRule"/>
</dbReference>
<dbReference type="GO" id="GO:0046872">
    <property type="term" value="F:metal ion binding"/>
    <property type="evidence" value="ECO:0007669"/>
    <property type="project" value="UniProtKB-KW"/>
</dbReference>
<dbReference type="GO" id="GO:0070040">
    <property type="term" value="F:rRNA (adenine(2503)-C2-)-methyltransferase activity"/>
    <property type="evidence" value="ECO:0007669"/>
    <property type="project" value="UniProtKB-UniRule"/>
</dbReference>
<dbReference type="GO" id="GO:0019843">
    <property type="term" value="F:rRNA binding"/>
    <property type="evidence" value="ECO:0007669"/>
    <property type="project" value="UniProtKB-UniRule"/>
</dbReference>
<dbReference type="GO" id="GO:0002935">
    <property type="term" value="F:tRNA (adenine(37)-C2)-methyltransferase activity"/>
    <property type="evidence" value="ECO:0007669"/>
    <property type="project" value="UniProtKB-UniRule"/>
</dbReference>
<dbReference type="GO" id="GO:0000049">
    <property type="term" value="F:tRNA binding"/>
    <property type="evidence" value="ECO:0007669"/>
    <property type="project" value="UniProtKB-UniRule"/>
</dbReference>
<dbReference type="GO" id="GO:0070475">
    <property type="term" value="P:rRNA base methylation"/>
    <property type="evidence" value="ECO:0007669"/>
    <property type="project" value="UniProtKB-UniRule"/>
</dbReference>
<dbReference type="GO" id="GO:0030488">
    <property type="term" value="P:tRNA methylation"/>
    <property type="evidence" value="ECO:0007669"/>
    <property type="project" value="UniProtKB-UniRule"/>
</dbReference>
<dbReference type="CDD" id="cd01335">
    <property type="entry name" value="Radical_SAM"/>
    <property type="match status" value="1"/>
</dbReference>
<dbReference type="FunFam" id="3.20.20.70:FF:000014">
    <property type="entry name" value="Probable dual-specificity RNA methyltransferase RlmN"/>
    <property type="match status" value="1"/>
</dbReference>
<dbReference type="Gene3D" id="1.10.150.530">
    <property type="match status" value="1"/>
</dbReference>
<dbReference type="Gene3D" id="3.20.20.70">
    <property type="entry name" value="Aldolase class I"/>
    <property type="match status" value="1"/>
</dbReference>
<dbReference type="HAMAP" id="MF_01849">
    <property type="entry name" value="RNA_methyltr_RlmN"/>
    <property type="match status" value="1"/>
</dbReference>
<dbReference type="InterPro" id="IPR013785">
    <property type="entry name" value="Aldolase_TIM"/>
</dbReference>
<dbReference type="InterPro" id="IPR040072">
    <property type="entry name" value="Methyltransferase_A"/>
</dbReference>
<dbReference type="InterPro" id="IPR048641">
    <property type="entry name" value="RlmN_N"/>
</dbReference>
<dbReference type="InterPro" id="IPR027492">
    <property type="entry name" value="RNA_MTrfase_RlmN"/>
</dbReference>
<dbReference type="InterPro" id="IPR004383">
    <property type="entry name" value="rRNA_lsu_MTrfase_RlmN/Cfr"/>
</dbReference>
<dbReference type="InterPro" id="IPR007197">
    <property type="entry name" value="rSAM"/>
</dbReference>
<dbReference type="NCBIfam" id="TIGR00048">
    <property type="entry name" value="rRNA_mod_RlmN"/>
    <property type="match status" value="1"/>
</dbReference>
<dbReference type="PANTHER" id="PTHR30544">
    <property type="entry name" value="23S RRNA METHYLTRANSFERASE"/>
    <property type="match status" value="1"/>
</dbReference>
<dbReference type="PANTHER" id="PTHR30544:SF5">
    <property type="entry name" value="RADICAL SAM CORE DOMAIN-CONTAINING PROTEIN"/>
    <property type="match status" value="1"/>
</dbReference>
<dbReference type="Pfam" id="PF04055">
    <property type="entry name" value="Radical_SAM"/>
    <property type="match status" value="1"/>
</dbReference>
<dbReference type="Pfam" id="PF21016">
    <property type="entry name" value="RlmN_N"/>
    <property type="match status" value="1"/>
</dbReference>
<dbReference type="PIRSF" id="PIRSF006004">
    <property type="entry name" value="CHP00048"/>
    <property type="match status" value="1"/>
</dbReference>
<dbReference type="SFLD" id="SFLDF00275">
    <property type="entry name" value="adenosine_C2_methyltransferase"/>
    <property type="match status" value="1"/>
</dbReference>
<dbReference type="SFLD" id="SFLDG01062">
    <property type="entry name" value="methyltransferase_(Class_A)"/>
    <property type="match status" value="1"/>
</dbReference>
<dbReference type="SUPFAM" id="SSF102114">
    <property type="entry name" value="Radical SAM enzymes"/>
    <property type="match status" value="1"/>
</dbReference>
<dbReference type="PROSITE" id="PS51918">
    <property type="entry name" value="RADICAL_SAM"/>
    <property type="match status" value="1"/>
</dbReference>
<comment type="function">
    <text evidence="1">Specifically methylates position 2 of adenine 2503 in 23S rRNA and position 2 of adenine 37 in tRNAs.</text>
</comment>
<comment type="catalytic activity">
    <reaction evidence="1">
        <text>adenosine(2503) in 23S rRNA + 2 reduced [2Fe-2S]-[ferredoxin] + 2 S-adenosyl-L-methionine = 2-methyladenosine(2503) in 23S rRNA + 5'-deoxyadenosine + L-methionine + 2 oxidized [2Fe-2S]-[ferredoxin] + S-adenosyl-L-homocysteine</text>
        <dbReference type="Rhea" id="RHEA:42916"/>
        <dbReference type="Rhea" id="RHEA-COMP:10000"/>
        <dbReference type="Rhea" id="RHEA-COMP:10001"/>
        <dbReference type="Rhea" id="RHEA-COMP:10152"/>
        <dbReference type="Rhea" id="RHEA-COMP:10282"/>
        <dbReference type="ChEBI" id="CHEBI:17319"/>
        <dbReference type="ChEBI" id="CHEBI:33737"/>
        <dbReference type="ChEBI" id="CHEBI:33738"/>
        <dbReference type="ChEBI" id="CHEBI:57844"/>
        <dbReference type="ChEBI" id="CHEBI:57856"/>
        <dbReference type="ChEBI" id="CHEBI:59789"/>
        <dbReference type="ChEBI" id="CHEBI:74411"/>
        <dbReference type="ChEBI" id="CHEBI:74497"/>
        <dbReference type="EC" id="2.1.1.192"/>
    </reaction>
</comment>
<comment type="catalytic activity">
    <reaction evidence="1">
        <text>adenosine(37) in tRNA + 2 reduced [2Fe-2S]-[ferredoxin] + 2 S-adenosyl-L-methionine = 2-methyladenosine(37) in tRNA + 5'-deoxyadenosine + L-methionine + 2 oxidized [2Fe-2S]-[ferredoxin] + S-adenosyl-L-homocysteine</text>
        <dbReference type="Rhea" id="RHEA:43332"/>
        <dbReference type="Rhea" id="RHEA-COMP:10000"/>
        <dbReference type="Rhea" id="RHEA-COMP:10001"/>
        <dbReference type="Rhea" id="RHEA-COMP:10162"/>
        <dbReference type="Rhea" id="RHEA-COMP:10485"/>
        <dbReference type="ChEBI" id="CHEBI:17319"/>
        <dbReference type="ChEBI" id="CHEBI:33737"/>
        <dbReference type="ChEBI" id="CHEBI:33738"/>
        <dbReference type="ChEBI" id="CHEBI:57844"/>
        <dbReference type="ChEBI" id="CHEBI:57856"/>
        <dbReference type="ChEBI" id="CHEBI:59789"/>
        <dbReference type="ChEBI" id="CHEBI:74411"/>
        <dbReference type="ChEBI" id="CHEBI:74497"/>
        <dbReference type="EC" id="2.1.1.192"/>
    </reaction>
</comment>
<comment type="cofactor">
    <cofactor evidence="1">
        <name>[4Fe-4S] cluster</name>
        <dbReference type="ChEBI" id="CHEBI:49883"/>
    </cofactor>
    <text evidence="1">Binds 1 [4Fe-4S] cluster. The cluster is coordinated with 3 cysteines and an exchangeable S-adenosyl-L-methionine.</text>
</comment>
<comment type="subcellular location">
    <subcellularLocation>
        <location evidence="1">Cytoplasm</location>
    </subcellularLocation>
</comment>
<comment type="miscellaneous">
    <text evidence="1">Reaction proceeds by a ping-pong mechanism involving intermediate methylation of a conserved cysteine residue.</text>
</comment>
<comment type="similarity">
    <text evidence="1">Belongs to the radical SAM superfamily. RlmN family.</text>
</comment>
<accession>Q24U12</accession>
<organism>
    <name type="scientific">Desulfitobacterium hafniense (strain Y51)</name>
    <dbReference type="NCBI Taxonomy" id="138119"/>
    <lineage>
        <taxon>Bacteria</taxon>
        <taxon>Bacillati</taxon>
        <taxon>Bacillota</taxon>
        <taxon>Clostridia</taxon>
        <taxon>Eubacteriales</taxon>
        <taxon>Desulfitobacteriaceae</taxon>
        <taxon>Desulfitobacterium</taxon>
    </lineage>
</organism>
<reference key="1">
    <citation type="journal article" date="2006" name="J. Bacteriol.">
        <title>Complete genome sequence of the dehalorespiring bacterium Desulfitobacterium hafniense Y51 and comparison with Dehalococcoides ethenogenes 195.</title>
        <authorList>
            <person name="Nonaka H."/>
            <person name="Keresztes G."/>
            <person name="Shinoda Y."/>
            <person name="Ikenaga Y."/>
            <person name="Abe M."/>
            <person name="Naito K."/>
            <person name="Inatomi K."/>
            <person name="Furukawa K."/>
            <person name="Inui M."/>
            <person name="Yukawa H."/>
        </authorList>
    </citation>
    <scope>NUCLEOTIDE SEQUENCE [LARGE SCALE GENOMIC DNA]</scope>
    <source>
        <strain>Y51</strain>
    </source>
</reference>
<sequence length="357" mass="40099">MNTMKRMDCRDLNQSELTQHCAELGLPKFRGRQVFQWVQQKAVQNWEELKNIGAGDRQKLQDGLFLQPLRKVREQISQDGTRKFLFRCADGETLECVLMDYDRRKNRDRHTVCVSTQIGCAVGCAFCATGLGGWRRNLSPGEILGQVLDITYLMRQEDPDFQVTNIVFMGMGEPLLNYEAVLKAIELLNDPEGQGIGMRRMTISTSGVAPKIRQLAKDNPQVGLAVSLHSAHNTTRDQLIPMNRKYPLEELMEACRDYTTLTNRRITFEIALISGQATLEAAQAVGHLLKRQLAHVNLIPVNPVAGTGMARPTAKEVQQFAQCLESMGIPVSVREEKGTDIDAACGQLRRQLECEQK</sequence>
<gene>
    <name evidence="1" type="primary">rlmN</name>
    <name type="ordered locus">DSY2691</name>
</gene>
<proteinExistence type="inferred from homology"/>
<name>RLMN_DESHY</name>